<gene>
    <name evidence="1" type="primary">rplR</name>
    <name evidence="1" type="synonym">rpl18</name>
    <name type="ordered locus">PM1399</name>
</gene>
<keyword id="KW-1185">Reference proteome</keyword>
<keyword id="KW-0687">Ribonucleoprotein</keyword>
<keyword id="KW-0689">Ribosomal protein</keyword>
<keyword id="KW-0694">RNA-binding</keyword>
<keyword id="KW-0699">rRNA-binding</keyword>
<evidence type="ECO:0000255" key="1">
    <source>
        <dbReference type="HAMAP-Rule" id="MF_01337"/>
    </source>
</evidence>
<evidence type="ECO:0000305" key="2"/>
<comment type="function">
    <text evidence="1">This is one of the proteins that bind and probably mediate the attachment of the 5S RNA into the large ribosomal subunit, where it forms part of the central protuberance.</text>
</comment>
<comment type="subunit">
    <text evidence="1">Part of the 50S ribosomal subunit; part of the 5S rRNA/L5/L18/L25 subcomplex. Contacts the 5S and 23S rRNAs.</text>
</comment>
<comment type="similarity">
    <text evidence="1">Belongs to the universal ribosomal protein uL18 family.</text>
</comment>
<organism>
    <name type="scientific">Pasteurella multocida (strain Pm70)</name>
    <dbReference type="NCBI Taxonomy" id="272843"/>
    <lineage>
        <taxon>Bacteria</taxon>
        <taxon>Pseudomonadati</taxon>
        <taxon>Pseudomonadota</taxon>
        <taxon>Gammaproteobacteria</taxon>
        <taxon>Pasteurellales</taxon>
        <taxon>Pasteurellaceae</taxon>
        <taxon>Pasteurella</taxon>
    </lineage>
</organism>
<feature type="chain" id="PRO_0000131314" description="Large ribosomal subunit protein uL18">
    <location>
        <begin position="1"/>
        <end position="117"/>
    </location>
</feature>
<sequence length="117" mass="12827">MDKKSARIRRAARARHMMREQGVTRLVIHRTPRHIYAQVIAPNGSEVLAAASTVEKVISEQVKYTGNKDAAAVVGKVVAERALAKGVKDVAFDRSGFKYHGRVQTLADAAREAGLQF</sequence>
<reference key="1">
    <citation type="journal article" date="2001" name="Proc. Natl. Acad. Sci. U.S.A.">
        <title>Complete genomic sequence of Pasteurella multocida Pm70.</title>
        <authorList>
            <person name="May B.J."/>
            <person name="Zhang Q."/>
            <person name="Li L.L."/>
            <person name="Paustian M.L."/>
            <person name="Whittam T.S."/>
            <person name="Kapur V."/>
        </authorList>
    </citation>
    <scope>NUCLEOTIDE SEQUENCE [LARGE SCALE GENOMIC DNA]</scope>
    <source>
        <strain>Pm70</strain>
    </source>
</reference>
<protein>
    <recommendedName>
        <fullName evidence="1">Large ribosomal subunit protein uL18</fullName>
    </recommendedName>
    <alternativeName>
        <fullName evidence="2">50S ribosomal protein L18</fullName>
    </alternativeName>
</protein>
<proteinExistence type="inferred from homology"/>
<name>RL18_PASMU</name>
<accession>Q9CL46</accession>
<dbReference type="EMBL" id="AE004439">
    <property type="protein sequence ID" value="AAK03483.1"/>
    <property type="molecule type" value="Genomic_DNA"/>
</dbReference>
<dbReference type="RefSeq" id="WP_005717916.1">
    <property type="nucleotide sequence ID" value="NC_002663.1"/>
</dbReference>
<dbReference type="SMR" id="Q9CL46"/>
<dbReference type="STRING" id="272843.PM1399"/>
<dbReference type="EnsemblBacteria" id="AAK03483">
    <property type="protein sequence ID" value="AAK03483"/>
    <property type="gene ID" value="PM1399"/>
</dbReference>
<dbReference type="GeneID" id="77207042"/>
<dbReference type="KEGG" id="pmu:PM1399"/>
<dbReference type="HOGENOM" id="CLU_098841_0_1_6"/>
<dbReference type="OrthoDB" id="9810939at2"/>
<dbReference type="Proteomes" id="UP000000809">
    <property type="component" value="Chromosome"/>
</dbReference>
<dbReference type="GO" id="GO:0022625">
    <property type="term" value="C:cytosolic large ribosomal subunit"/>
    <property type="evidence" value="ECO:0007669"/>
    <property type="project" value="TreeGrafter"/>
</dbReference>
<dbReference type="GO" id="GO:0008097">
    <property type="term" value="F:5S rRNA binding"/>
    <property type="evidence" value="ECO:0007669"/>
    <property type="project" value="TreeGrafter"/>
</dbReference>
<dbReference type="GO" id="GO:0003735">
    <property type="term" value="F:structural constituent of ribosome"/>
    <property type="evidence" value="ECO:0007669"/>
    <property type="project" value="InterPro"/>
</dbReference>
<dbReference type="GO" id="GO:0006412">
    <property type="term" value="P:translation"/>
    <property type="evidence" value="ECO:0007669"/>
    <property type="project" value="UniProtKB-UniRule"/>
</dbReference>
<dbReference type="CDD" id="cd00432">
    <property type="entry name" value="Ribosomal_L18_L5e"/>
    <property type="match status" value="1"/>
</dbReference>
<dbReference type="FunFam" id="3.30.420.100:FF:000001">
    <property type="entry name" value="50S ribosomal protein L18"/>
    <property type="match status" value="1"/>
</dbReference>
<dbReference type="Gene3D" id="3.30.420.100">
    <property type="match status" value="1"/>
</dbReference>
<dbReference type="HAMAP" id="MF_01337_B">
    <property type="entry name" value="Ribosomal_uL18_B"/>
    <property type="match status" value="1"/>
</dbReference>
<dbReference type="InterPro" id="IPR004389">
    <property type="entry name" value="Ribosomal_uL18_bac-type"/>
</dbReference>
<dbReference type="InterPro" id="IPR005484">
    <property type="entry name" value="Ribosomal_uL18_bac/euk"/>
</dbReference>
<dbReference type="NCBIfam" id="TIGR00060">
    <property type="entry name" value="L18_bact"/>
    <property type="match status" value="1"/>
</dbReference>
<dbReference type="PANTHER" id="PTHR12899">
    <property type="entry name" value="39S RIBOSOMAL PROTEIN L18, MITOCHONDRIAL"/>
    <property type="match status" value="1"/>
</dbReference>
<dbReference type="PANTHER" id="PTHR12899:SF3">
    <property type="entry name" value="LARGE RIBOSOMAL SUBUNIT PROTEIN UL18M"/>
    <property type="match status" value="1"/>
</dbReference>
<dbReference type="Pfam" id="PF00861">
    <property type="entry name" value="Ribosomal_L18p"/>
    <property type="match status" value="1"/>
</dbReference>
<dbReference type="SUPFAM" id="SSF53137">
    <property type="entry name" value="Translational machinery components"/>
    <property type="match status" value="1"/>
</dbReference>